<accession>Q74C65</accession>
<organism>
    <name type="scientific">Geobacter sulfurreducens (strain ATCC 51573 / DSM 12127 / PCA)</name>
    <dbReference type="NCBI Taxonomy" id="243231"/>
    <lineage>
        <taxon>Bacteria</taxon>
        <taxon>Pseudomonadati</taxon>
        <taxon>Thermodesulfobacteriota</taxon>
        <taxon>Desulfuromonadia</taxon>
        <taxon>Geobacterales</taxon>
        <taxon>Geobacteraceae</taxon>
        <taxon>Geobacter</taxon>
    </lineage>
</organism>
<evidence type="ECO:0000255" key="1">
    <source>
        <dbReference type="HAMAP-Rule" id="MF_01161"/>
    </source>
</evidence>
<proteinExistence type="inferred from homology"/>
<sequence>MKTLSPVDAVLKKVRAFNAEHGMFRPGDRVVVAVSGGADSVALVDILVSLNELRLDLVVAHLNHKLRGAASDEDERFVEQCAQTYALPFVSRGEQVKALAEWERLSLEDAGRRARYAFFDDVAAACGARTVALAHHADDQAETLLMRLVRGAGGLGLSAMQPVGAGGKYVRPLLALGRQEIEAYLDARGLAFRQDQSNTDVAFLRNRIRHELVPYLGRLNPGAASRLARTAELLADDEALLSRLVEEALRRHVMVTEQGGAICSVDTLRREPRGLRRRLYRKAIALAKGDLARISFDHVDAIDRLVLSENPSGRLHLPEEILVTRSYNEVAFARRMADIPSLQELWIDGPGCWPLSGGGELVVEIATGPPPWGELSTTESWFDLELAPFPWLIRGWRPGDRMIPLGMTGEKKVKDIFIDQKVPRELRRSIPLLFRGDSLLWVCGCRRGESARITAGSRAMAVVRIRGRRLK</sequence>
<dbReference type="EC" id="6.3.4.19" evidence="1"/>
<dbReference type="EMBL" id="AE017180">
    <property type="protein sequence ID" value="AAR35187.1"/>
    <property type="molecule type" value="Genomic_DNA"/>
</dbReference>
<dbReference type="RefSeq" id="NP_952860.1">
    <property type="nucleotide sequence ID" value="NC_002939.5"/>
</dbReference>
<dbReference type="RefSeq" id="WP_010942455.1">
    <property type="nucleotide sequence ID" value="NC_002939.5"/>
</dbReference>
<dbReference type="SMR" id="Q74C65"/>
<dbReference type="FunCoup" id="Q74C65">
    <property type="interactions" value="322"/>
</dbReference>
<dbReference type="STRING" id="243231.GSU1810"/>
<dbReference type="EnsemblBacteria" id="AAR35187">
    <property type="protein sequence ID" value="AAR35187"/>
    <property type="gene ID" value="GSU1810"/>
</dbReference>
<dbReference type="KEGG" id="gsu:GSU1810"/>
<dbReference type="PATRIC" id="fig|243231.5.peg.1848"/>
<dbReference type="eggNOG" id="COG0037">
    <property type="taxonomic scope" value="Bacteria"/>
</dbReference>
<dbReference type="HOGENOM" id="CLU_018869_0_1_7"/>
<dbReference type="InParanoid" id="Q74C65"/>
<dbReference type="OrthoDB" id="9807403at2"/>
<dbReference type="Proteomes" id="UP000000577">
    <property type="component" value="Chromosome"/>
</dbReference>
<dbReference type="GO" id="GO:0005737">
    <property type="term" value="C:cytoplasm"/>
    <property type="evidence" value="ECO:0007669"/>
    <property type="project" value="UniProtKB-SubCell"/>
</dbReference>
<dbReference type="GO" id="GO:0005524">
    <property type="term" value="F:ATP binding"/>
    <property type="evidence" value="ECO:0007669"/>
    <property type="project" value="UniProtKB-UniRule"/>
</dbReference>
<dbReference type="GO" id="GO:0032267">
    <property type="term" value="F:tRNA(Ile)-lysidine synthase activity"/>
    <property type="evidence" value="ECO:0007669"/>
    <property type="project" value="UniProtKB-EC"/>
</dbReference>
<dbReference type="GO" id="GO:0006400">
    <property type="term" value="P:tRNA modification"/>
    <property type="evidence" value="ECO:0007669"/>
    <property type="project" value="UniProtKB-UniRule"/>
</dbReference>
<dbReference type="CDD" id="cd01992">
    <property type="entry name" value="TilS_N"/>
    <property type="match status" value="1"/>
</dbReference>
<dbReference type="Gene3D" id="3.30.465.60">
    <property type="match status" value="1"/>
</dbReference>
<dbReference type="Gene3D" id="3.40.50.620">
    <property type="entry name" value="HUPs"/>
    <property type="match status" value="1"/>
</dbReference>
<dbReference type="HAMAP" id="MF_01161">
    <property type="entry name" value="tRNA_Ile_lys_synt"/>
    <property type="match status" value="1"/>
</dbReference>
<dbReference type="InterPro" id="IPR012796">
    <property type="entry name" value="Lysidine-tRNA-synth_C"/>
</dbReference>
<dbReference type="InterPro" id="IPR014729">
    <property type="entry name" value="Rossmann-like_a/b/a_fold"/>
</dbReference>
<dbReference type="InterPro" id="IPR011063">
    <property type="entry name" value="TilS/TtcA_N"/>
</dbReference>
<dbReference type="InterPro" id="IPR012094">
    <property type="entry name" value="tRNA_Ile_lys_synt"/>
</dbReference>
<dbReference type="InterPro" id="IPR012795">
    <property type="entry name" value="tRNA_Ile_lys_synt_N"/>
</dbReference>
<dbReference type="InterPro" id="IPR015262">
    <property type="entry name" value="tRNA_Ile_lys_synt_subst-bd"/>
</dbReference>
<dbReference type="NCBIfam" id="TIGR02433">
    <property type="entry name" value="lysidine_TilS_C"/>
    <property type="match status" value="1"/>
</dbReference>
<dbReference type="NCBIfam" id="TIGR02432">
    <property type="entry name" value="lysidine_TilS_N"/>
    <property type="match status" value="1"/>
</dbReference>
<dbReference type="PANTHER" id="PTHR43033">
    <property type="entry name" value="TRNA(ILE)-LYSIDINE SYNTHASE-RELATED"/>
    <property type="match status" value="1"/>
</dbReference>
<dbReference type="PANTHER" id="PTHR43033:SF1">
    <property type="entry name" value="TRNA(ILE)-LYSIDINE SYNTHASE-RELATED"/>
    <property type="match status" value="1"/>
</dbReference>
<dbReference type="Pfam" id="PF01171">
    <property type="entry name" value="ATP_bind_3"/>
    <property type="match status" value="1"/>
</dbReference>
<dbReference type="Pfam" id="PF09179">
    <property type="entry name" value="TilS"/>
    <property type="match status" value="1"/>
</dbReference>
<dbReference type="Pfam" id="PF11734">
    <property type="entry name" value="TilS_C"/>
    <property type="match status" value="1"/>
</dbReference>
<dbReference type="SMART" id="SM00977">
    <property type="entry name" value="TilS_C"/>
    <property type="match status" value="1"/>
</dbReference>
<dbReference type="SUPFAM" id="SSF52402">
    <property type="entry name" value="Adenine nucleotide alpha hydrolases-like"/>
    <property type="match status" value="1"/>
</dbReference>
<dbReference type="SUPFAM" id="SSF82829">
    <property type="entry name" value="MesJ substrate recognition domain-like"/>
    <property type="match status" value="1"/>
</dbReference>
<dbReference type="SUPFAM" id="SSF56037">
    <property type="entry name" value="PheT/TilS domain"/>
    <property type="match status" value="1"/>
</dbReference>
<comment type="function">
    <text evidence="1">Ligates lysine onto the cytidine present at position 34 of the AUA codon-specific tRNA(Ile) that contains the anticodon CAU, in an ATP-dependent manner. Cytidine is converted to lysidine, thus changing the amino acid specificity of the tRNA from methionine to isoleucine.</text>
</comment>
<comment type="catalytic activity">
    <reaction evidence="1">
        <text>cytidine(34) in tRNA(Ile2) + L-lysine + ATP = lysidine(34) in tRNA(Ile2) + AMP + diphosphate + H(+)</text>
        <dbReference type="Rhea" id="RHEA:43744"/>
        <dbReference type="Rhea" id="RHEA-COMP:10625"/>
        <dbReference type="Rhea" id="RHEA-COMP:10670"/>
        <dbReference type="ChEBI" id="CHEBI:15378"/>
        <dbReference type="ChEBI" id="CHEBI:30616"/>
        <dbReference type="ChEBI" id="CHEBI:32551"/>
        <dbReference type="ChEBI" id="CHEBI:33019"/>
        <dbReference type="ChEBI" id="CHEBI:82748"/>
        <dbReference type="ChEBI" id="CHEBI:83665"/>
        <dbReference type="ChEBI" id="CHEBI:456215"/>
        <dbReference type="EC" id="6.3.4.19"/>
    </reaction>
</comment>
<comment type="subcellular location">
    <subcellularLocation>
        <location evidence="1">Cytoplasm</location>
    </subcellularLocation>
</comment>
<comment type="domain">
    <text>The N-terminal region contains the highly conserved SGGXDS motif, predicted to be a P-loop motif involved in ATP binding.</text>
</comment>
<comment type="similarity">
    <text evidence="1">Belongs to the tRNA(Ile)-lysidine synthase family.</text>
</comment>
<protein>
    <recommendedName>
        <fullName evidence="1">tRNA(Ile)-lysidine synthase</fullName>
        <ecNumber evidence="1">6.3.4.19</ecNumber>
    </recommendedName>
    <alternativeName>
        <fullName evidence="1">tRNA(Ile)-2-lysyl-cytidine synthase</fullName>
    </alternativeName>
    <alternativeName>
        <fullName evidence="1">tRNA(Ile)-lysidine synthetase</fullName>
    </alternativeName>
</protein>
<keyword id="KW-0067">ATP-binding</keyword>
<keyword id="KW-0963">Cytoplasm</keyword>
<keyword id="KW-0436">Ligase</keyword>
<keyword id="KW-0547">Nucleotide-binding</keyword>
<keyword id="KW-1185">Reference proteome</keyword>
<keyword id="KW-0819">tRNA processing</keyword>
<name>TILS_GEOSL</name>
<reference key="1">
    <citation type="journal article" date="2003" name="Science">
        <title>Genome of Geobacter sulfurreducens: metal reduction in subsurface environments.</title>
        <authorList>
            <person name="Methe B.A."/>
            <person name="Nelson K.E."/>
            <person name="Eisen J.A."/>
            <person name="Paulsen I.T."/>
            <person name="Nelson W.C."/>
            <person name="Heidelberg J.F."/>
            <person name="Wu D."/>
            <person name="Wu M."/>
            <person name="Ward N.L."/>
            <person name="Beanan M.J."/>
            <person name="Dodson R.J."/>
            <person name="Madupu R."/>
            <person name="Brinkac L.M."/>
            <person name="Daugherty S.C."/>
            <person name="DeBoy R.T."/>
            <person name="Durkin A.S."/>
            <person name="Gwinn M.L."/>
            <person name="Kolonay J.F."/>
            <person name="Sullivan S.A."/>
            <person name="Haft D.H."/>
            <person name="Selengut J."/>
            <person name="Davidsen T.M."/>
            <person name="Zafar N."/>
            <person name="White O."/>
            <person name="Tran B."/>
            <person name="Romero C."/>
            <person name="Forberger H.A."/>
            <person name="Weidman J.F."/>
            <person name="Khouri H.M."/>
            <person name="Feldblyum T.V."/>
            <person name="Utterback T.R."/>
            <person name="Van Aken S.E."/>
            <person name="Lovley D.R."/>
            <person name="Fraser C.M."/>
        </authorList>
    </citation>
    <scope>NUCLEOTIDE SEQUENCE [LARGE SCALE GENOMIC DNA]</scope>
    <source>
        <strain>ATCC 51573 / DSM 12127 / PCA</strain>
    </source>
</reference>
<feature type="chain" id="PRO_0000181697" description="tRNA(Ile)-lysidine synthase">
    <location>
        <begin position="1"/>
        <end position="471"/>
    </location>
</feature>
<feature type="binding site" evidence="1">
    <location>
        <begin position="35"/>
        <end position="40"/>
    </location>
    <ligand>
        <name>ATP</name>
        <dbReference type="ChEBI" id="CHEBI:30616"/>
    </ligand>
</feature>
<gene>
    <name evidence="1" type="primary">tilS</name>
    <name type="ordered locus">GSU1810</name>
</gene>